<evidence type="ECO:0000255" key="1">
    <source>
        <dbReference type="HAMAP-Rule" id="MF_00161"/>
    </source>
</evidence>
<evidence type="ECO:0000256" key="2">
    <source>
        <dbReference type="SAM" id="MobiDB-lite"/>
    </source>
</evidence>
<dbReference type="EC" id="3.4.23.36" evidence="1"/>
<dbReference type="EMBL" id="AM408590">
    <property type="protein sequence ID" value="CAL71578.1"/>
    <property type="molecule type" value="Genomic_DNA"/>
</dbReference>
<dbReference type="RefSeq" id="WP_003407722.1">
    <property type="nucleotide sequence ID" value="NC_008769.1"/>
</dbReference>
<dbReference type="SMR" id="A1KIW9"/>
<dbReference type="GeneID" id="45425522"/>
<dbReference type="KEGG" id="mbb:BCG_1591"/>
<dbReference type="HOGENOM" id="CLU_083252_2_2_11"/>
<dbReference type="UniPathway" id="UPA00665"/>
<dbReference type="Proteomes" id="UP000001472">
    <property type="component" value="Chromosome"/>
</dbReference>
<dbReference type="GO" id="GO:0005886">
    <property type="term" value="C:plasma membrane"/>
    <property type="evidence" value="ECO:0007669"/>
    <property type="project" value="UniProtKB-SubCell"/>
</dbReference>
<dbReference type="GO" id="GO:0004190">
    <property type="term" value="F:aspartic-type endopeptidase activity"/>
    <property type="evidence" value="ECO:0007669"/>
    <property type="project" value="UniProtKB-UniRule"/>
</dbReference>
<dbReference type="GO" id="GO:0006508">
    <property type="term" value="P:proteolysis"/>
    <property type="evidence" value="ECO:0007669"/>
    <property type="project" value="UniProtKB-KW"/>
</dbReference>
<dbReference type="HAMAP" id="MF_00161">
    <property type="entry name" value="LspA"/>
    <property type="match status" value="1"/>
</dbReference>
<dbReference type="InterPro" id="IPR001872">
    <property type="entry name" value="Peptidase_A8"/>
</dbReference>
<dbReference type="NCBIfam" id="TIGR00077">
    <property type="entry name" value="lspA"/>
    <property type="match status" value="1"/>
</dbReference>
<dbReference type="PANTHER" id="PTHR33695">
    <property type="entry name" value="LIPOPROTEIN SIGNAL PEPTIDASE"/>
    <property type="match status" value="1"/>
</dbReference>
<dbReference type="PANTHER" id="PTHR33695:SF1">
    <property type="entry name" value="LIPOPROTEIN SIGNAL PEPTIDASE"/>
    <property type="match status" value="1"/>
</dbReference>
<dbReference type="Pfam" id="PF01252">
    <property type="entry name" value="Peptidase_A8"/>
    <property type="match status" value="1"/>
</dbReference>
<dbReference type="PRINTS" id="PR00781">
    <property type="entry name" value="LIPOSIGPTASE"/>
</dbReference>
<dbReference type="PROSITE" id="PS00855">
    <property type="entry name" value="SPASE_II"/>
    <property type="match status" value="1"/>
</dbReference>
<accession>A1KIW9</accession>
<keyword id="KW-0064">Aspartyl protease</keyword>
<keyword id="KW-1003">Cell membrane</keyword>
<keyword id="KW-0378">Hydrolase</keyword>
<keyword id="KW-0472">Membrane</keyword>
<keyword id="KW-0645">Protease</keyword>
<keyword id="KW-0812">Transmembrane</keyword>
<keyword id="KW-1133">Transmembrane helix</keyword>
<name>LSPA_MYCBP</name>
<comment type="function">
    <text evidence="1">This protein specifically catalyzes the removal of signal peptides from prolipoproteins.</text>
</comment>
<comment type="catalytic activity">
    <reaction evidence="1">
        <text>Release of signal peptides from bacterial membrane prolipoproteins. Hydrolyzes -Xaa-Yaa-Zaa-|-(S,diacylglyceryl)Cys-, in which Xaa is hydrophobic (preferably Leu), and Yaa (Ala or Ser) and Zaa (Gly or Ala) have small, neutral side chains.</text>
        <dbReference type="EC" id="3.4.23.36"/>
    </reaction>
</comment>
<comment type="pathway">
    <text evidence="1">Protein modification; lipoprotein biosynthesis (signal peptide cleavage).</text>
</comment>
<comment type="subcellular location">
    <subcellularLocation>
        <location evidence="1">Cell membrane</location>
        <topology evidence="1">Multi-pass membrane protein</topology>
    </subcellularLocation>
</comment>
<comment type="similarity">
    <text evidence="1">Belongs to the peptidase A8 family.</text>
</comment>
<organism>
    <name type="scientific">Mycobacterium bovis (strain BCG / Pasteur 1173P2)</name>
    <dbReference type="NCBI Taxonomy" id="410289"/>
    <lineage>
        <taxon>Bacteria</taxon>
        <taxon>Bacillati</taxon>
        <taxon>Actinomycetota</taxon>
        <taxon>Actinomycetes</taxon>
        <taxon>Mycobacteriales</taxon>
        <taxon>Mycobacteriaceae</taxon>
        <taxon>Mycobacterium</taxon>
        <taxon>Mycobacterium tuberculosis complex</taxon>
    </lineage>
</organism>
<reference key="1">
    <citation type="journal article" date="2007" name="Proc. Natl. Acad. Sci. U.S.A.">
        <title>Genome plasticity of BCG and impact on vaccine efficacy.</title>
        <authorList>
            <person name="Brosch R."/>
            <person name="Gordon S.V."/>
            <person name="Garnier T."/>
            <person name="Eiglmeier K."/>
            <person name="Frigui W."/>
            <person name="Valenti P."/>
            <person name="Dos Santos S."/>
            <person name="Duthoy S."/>
            <person name="Lacroix C."/>
            <person name="Garcia-Pelayo C."/>
            <person name="Inwald J.K."/>
            <person name="Golby P."/>
            <person name="Garcia J.N."/>
            <person name="Hewinson R.G."/>
            <person name="Behr M.A."/>
            <person name="Quail M.A."/>
            <person name="Churcher C."/>
            <person name="Barrell B.G."/>
            <person name="Parkhill J."/>
            <person name="Cole S.T."/>
        </authorList>
    </citation>
    <scope>NUCLEOTIDE SEQUENCE [LARGE SCALE GENOMIC DNA]</scope>
    <source>
        <strain>BCG / Pasteur 1173P2</strain>
    </source>
</reference>
<sequence length="202" mass="21345">MPDEPTGSADPLTSTEEAGGAGEPNAPAPPRRLRMLLSVAVVVLTLDIVTKVVAVQLLPPGQPVSIIGDTVTWTLVRNSGAAFSMATGYTWVLTLIATGVVVGIFWMGRRLVSPWWALGLGMILGGAMGNLVDRFFRAPGPLRGHVVDFLSVGWWPVFNVADPSVVGGAILLVILSIFGFDFDTVGRRHADGDTVGRRKADG</sequence>
<feature type="chain" id="PRO_0000289401" description="Lipoprotein signal peptidase">
    <location>
        <begin position="1"/>
        <end position="202"/>
    </location>
</feature>
<feature type="transmembrane region" description="Helical" evidence="1">
    <location>
        <begin position="35"/>
        <end position="55"/>
    </location>
</feature>
<feature type="transmembrane region" description="Helical" evidence="1">
    <location>
        <begin position="88"/>
        <end position="108"/>
    </location>
</feature>
<feature type="transmembrane region" description="Helical" evidence="1">
    <location>
        <begin position="112"/>
        <end position="132"/>
    </location>
</feature>
<feature type="transmembrane region" description="Helical" evidence="1">
    <location>
        <begin position="160"/>
        <end position="180"/>
    </location>
</feature>
<feature type="region of interest" description="Disordered" evidence="2">
    <location>
        <begin position="1"/>
        <end position="29"/>
    </location>
</feature>
<feature type="active site" evidence="1">
    <location>
        <position position="148"/>
    </location>
</feature>
<feature type="active site" evidence="1">
    <location>
        <position position="162"/>
    </location>
</feature>
<gene>
    <name evidence="1" type="primary">lspA</name>
    <name type="ordered locus">BCG_1591</name>
</gene>
<proteinExistence type="inferred from homology"/>
<protein>
    <recommendedName>
        <fullName evidence="1">Lipoprotein signal peptidase</fullName>
        <ecNumber evidence="1">3.4.23.36</ecNumber>
    </recommendedName>
    <alternativeName>
        <fullName evidence="1">Prolipoprotein signal peptidase</fullName>
    </alternativeName>
    <alternativeName>
        <fullName evidence="1">Signal peptidase II</fullName>
        <shortName evidence="1">SPase II</shortName>
    </alternativeName>
</protein>